<dbReference type="EC" id="5.1.1.7" evidence="1"/>
<dbReference type="EMBL" id="AP008231">
    <property type="protein sequence ID" value="BAD80357.1"/>
    <property type="molecule type" value="Genomic_DNA"/>
</dbReference>
<dbReference type="RefSeq" id="WP_011244477.1">
    <property type="nucleotide sequence ID" value="NZ_CP085785.1"/>
</dbReference>
<dbReference type="SMR" id="Q5N013"/>
<dbReference type="GeneID" id="72430800"/>
<dbReference type="KEGG" id="syc:syc2167_c"/>
<dbReference type="eggNOG" id="COG0253">
    <property type="taxonomic scope" value="Bacteria"/>
</dbReference>
<dbReference type="UniPathway" id="UPA00034">
    <property type="reaction ID" value="UER00025"/>
</dbReference>
<dbReference type="Proteomes" id="UP000001175">
    <property type="component" value="Chromosome"/>
</dbReference>
<dbReference type="GO" id="GO:0005829">
    <property type="term" value="C:cytosol"/>
    <property type="evidence" value="ECO:0007669"/>
    <property type="project" value="TreeGrafter"/>
</dbReference>
<dbReference type="GO" id="GO:0008837">
    <property type="term" value="F:diaminopimelate epimerase activity"/>
    <property type="evidence" value="ECO:0007669"/>
    <property type="project" value="UniProtKB-UniRule"/>
</dbReference>
<dbReference type="GO" id="GO:0009089">
    <property type="term" value="P:lysine biosynthetic process via diaminopimelate"/>
    <property type="evidence" value="ECO:0007669"/>
    <property type="project" value="UniProtKB-UniRule"/>
</dbReference>
<dbReference type="FunFam" id="3.10.310.10:FF:000009">
    <property type="entry name" value="Diaminopimelate epimerase chloroplastic"/>
    <property type="match status" value="1"/>
</dbReference>
<dbReference type="FunFam" id="3.10.310.10:FF:000011">
    <property type="entry name" value="Diaminopimelate epimerase, chloroplastic"/>
    <property type="match status" value="1"/>
</dbReference>
<dbReference type="Gene3D" id="3.10.310.10">
    <property type="entry name" value="Diaminopimelate Epimerase, Chain A, domain 1"/>
    <property type="match status" value="2"/>
</dbReference>
<dbReference type="HAMAP" id="MF_00197">
    <property type="entry name" value="DAP_epimerase"/>
    <property type="match status" value="1"/>
</dbReference>
<dbReference type="InterPro" id="IPR018510">
    <property type="entry name" value="DAP_epimerase_AS"/>
</dbReference>
<dbReference type="InterPro" id="IPR001653">
    <property type="entry name" value="DAP_epimerase_DapF"/>
</dbReference>
<dbReference type="NCBIfam" id="TIGR00652">
    <property type="entry name" value="DapF"/>
    <property type="match status" value="1"/>
</dbReference>
<dbReference type="PANTHER" id="PTHR31689:SF0">
    <property type="entry name" value="DIAMINOPIMELATE EPIMERASE"/>
    <property type="match status" value="1"/>
</dbReference>
<dbReference type="PANTHER" id="PTHR31689">
    <property type="entry name" value="DIAMINOPIMELATE EPIMERASE, CHLOROPLASTIC"/>
    <property type="match status" value="1"/>
</dbReference>
<dbReference type="Pfam" id="PF01678">
    <property type="entry name" value="DAP_epimerase"/>
    <property type="match status" value="2"/>
</dbReference>
<dbReference type="SUPFAM" id="SSF54506">
    <property type="entry name" value="Diaminopimelate epimerase-like"/>
    <property type="match status" value="2"/>
</dbReference>
<dbReference type="PROSITE" id="PS01326">
    <property type="entry name" value="DAP_EPIMERASE"/>
    <property type="match status" value="1"/>
</dbReference>
<keyword id="KW-0028">Amino-acid biosynthesis</keyword>
<keyword id="KW-0963">Cytoplasm</keyword>
<keyword id="KW-0413">Isomerase</keyword>
<keyword id="KW-0457">Lysine biosynthesis</keyword>
<accession>Q5N013</accession>
<evidence type="ECO:0000255" key="1">
    <source>
        <dbReference type="HAMAP-Rule" id="MF_00197"/>
    </source>
</evidence>
<proteinExistence type="inferred from homology"/>
<protein>
    <recommendedName>
        <fullName evidence="1">Diaminopimelate epimerase</fullName>
        <shortName evidence="1">DAP epimerase</shortName>
        <ecNumber evidence="1">5.1.1.7</ecNumber>
    </recommendedName>
    <alternativeName>
        <fullName evidence="1">PLP-independent amino acid racemase</fullName>
    </alternativeName>
</protein>
<name>DAPF_SYNP6</name>
<feature type="chain" id="PRO_1000011976" description="Diaminopimelate epimerase">
    <location>
        <begin position="1"/>
        <end position="280"/>
    </location>
</feature>
<feature type="active site" description="Proton donor" evidence="1">
    <location>
        <position position="75"/>
    </location>
</feature>
<feature type="active site" description="Proton acceptor" evidence="1">
    <location>
        <position position="222"/>
    </location>
</feature>
<feature type="binding site" evidence="1">
    <location>
        <position position="13"/>
    </location>
    <ligand>
        <name>substrate</name>
    </ligand>
</feature>
<feature type="binding site" evidence="1">
    <location>
        <position position="66"/>
    </location>
    <ligand>
        <name>substrate</name>
    </ligand>
</feature>
<feature type="binding site" evidence="1">
    <location>
        <begin position="76"/>
        <end position="77"/>
    </location>
    <ligand>
        <name>substrate</name>
    </ligand>
</feature>
<feature type="binding site" evidence="1">
    <location>
        <position position="162"/>
    </location>
    <ligand>
        <name>substrate</name>
    </ligand>
</feature>
<feature type="binding site" evidence="1">
    <location>
        <position position="195"/>
    </location>
    <ligand>
        <name>substrate</name>
    </ligand>
</feature>
<feature type="binding site" evidence="1">
    <location>
        <begin position="213"/>
        <end position="214"/>
    </location>
    <ligand>
        <name>substrate</name>
    </ligand>
</feature>
<feature type="binding site" evidence="1">
    <location>
        <begin position="223"/>
        <end position="224"/>
    </location>
    <ligand>
        <name>substrate</name>
    </ligand>
</feature>
<feature type="site" description="Could be important to modulate the pK values of the two catalytic cysteine residues" evidence="1">
    <location>
        <position position="164"/>
    </location>
</feature>
<feature type="site" description="Could be important to modulate the pK values of the two catalytic cysteine residues" evidence="1">
    <location>
        <position position="213"/>
    </location>
</feature>
<gene>
    <name evidence="1" type="primary">dapF</name>
    <name type="ordered locus">syc2167_c</name>
</gene>
<organism>
    <name type="scientific">Synechococcus sp. (strain ATCC 27144 / PCC 6301 / SAUG 1402/1)</name>
    <name type="common">Anacystis nidulans</name>
    <dbReference type="NCBI Taxonomy" id="269084"/>
    <lineage>
        <taxon>Bacteria</taxon>
        <taxon>Bacillati</taxon>
        <taxon>Cyanobacteriota</taxon>
        <taxon>Cyanophyceae</taxon>
        <taxon>Synechococcales</taxon>
        <taxon>Synechococcaceae</taxon>
        <taxon>Synechococcus</taxon>
    </lineage>
</organism>
<comment type="function">
    <text evidence="1">Catalyzes the stereoinversion of LL-2,6-diaminopimelate (L,L-DAP) to meso-diaminopimelate (meso-DAP), a precursor of L-lysine and an essential component of the bacterial peptidoglycan.</text>
</comment>
<comment type="catalytic activity">
    <reaction evidence="1">
        <text>(2S,6S)-2,6-diaminopimelate = meso-2,6-diaminopimelate</text>
        <dbReference type="Rhea" id="RHEA:15393"/>
        <dbReference type="ChEBI" id="CHEBI:57609"/>
        <dbReference type="ChEBI" id="CHEBI:57791"/>
        <dbReference type="EC" id="5.1.1.7"/>
    </reaction>
</comment>
<comment type="pathway">
    <text evidence="1">Amino-acid biosynthesis; L-lysine biosynthesis via DAP pathway; DL-2,6-diaminopimelate from LL-2,6-diaminopimelate: step 1/1.</text>
</comment>
<comment type="subunit">
    <text evidence="1">Homodimer.</text>
</comment>
<comment type="subcellular location">
    <subcellularLocation>
        <location evidence="1">Cytoplasm</location>
    </subcellularLocation>
</comment>
<comment type="similarity">
    <text evidence="1">Belongs to the diaminopimelate epimerase family.</text>
</comment>
<sequence>MSLQFAKYHGLGNDFILVDNRESGEPRLTPEQAVQVCDRNFGVGADGVIFALPGSGDSDYVMRIFNSDGSEPEMCGNGIRCLAKFLSELDGGAQSRYRIATGAGLIVPTLTETGLVTVDMGPAYLKPVEIPTTLTGTGDRVVEADLEVGDRPWKVTTVSMGNPHCITFVEDVAAVPLAEIGPLFEHHPVFPQRTNTEFVEVVRPDYLKMRVWERGAGATLACGTGACATLVAAVLTGRSDRQATVELPGGPLQIEWREDGHLFMTGPAVKVFSGSMELAA</sequence>
<reference key="1">
    <citation type="journal article" date="2007" name="Photosyn. Res.">
        <title>Complete nucleotide sequence of the freshwater unicellular cyanobacterium Synechococcus elongatus PCC 6301 chromosome: gene content and organization.</title>
        <authorList>
            <person name="Sugita C."/>
            <person name="Ogata K."/>
            <person name="Shikata M."/>
            <person name="Jikuya H."/>
            <person name="Takano J."/>
            <person name="Furumichi M."/>
            <person name="Kanehisa M."/>
            <person name="Omata T."/>
            <person name="Sugiura M."/>
            <person name="Sugita M."/>
        </authorList>
    </citation>
    <scope>NUCLEOTIDE SEQUENCE [LARGE SCALE GENOMIC DNA]</scope>
    <source>
        <strain>ATCC 27144 / PCC 6301 / SAUG 1402/1</strain>
    </source>
</reference>